<evidence type="ECO:0000255" key="1">
    <source>
        <dbReference type="HAMAP-Rule" id="MF_02007"/>
    </source>
</evidence>
<dbReference type="EC" id="6.1.1.1" evidence="1"/>
<dbReference type="EMBL" id="CP000097">
    <property type="protein sequence ID" value="ABB25535.1"/>
    <property type="molecule type" value="Genomic_DNA"/>
</dbReference>
<dbReference type="RefSeq" id="WP_011359381.1">
    <property type="nucleotide sequence ID" value="NC_007513.1"/>
</dbReference>
<dbReference type="SMR" id="Q3AZE2"/>
<dbReference type="STRING" id="316279.Syncc9902_0567"/>
<dbReference type="KEGG" id="sye:Syncc9902_0567"/>
<dbReference type="eggNOG" id="COG0162">
    <property type="taxonomic scope" value="Bacteria"/>
</dbReference>
<dbReference type="HOGENOM" id="CLU_024003_5_0_3"/>
<dbReference type="OrthoDB" id="9804243at2"/>
<dbReference type="Proteomes" id="UP000002712">
    <property type="component" value="Chromosome"/>
</dbReference>
<dbReference type="GO" id="GO:0005829">
    <property type="term" value="C:cytosol"/>
    <property type="evidence" value="ECO:0007669"/>
    <property type="project" value="TreeGrafter"/>
</dbReference>
<dbReference type="GO" id="GO:0005524">
    <property type="term" value="F:ATP binding"/>
    <property type="evidence" value="ECO:0007669"/>
    <property type="project" value="UniProtKB-UniRule"/>
</dbReference>
<dbReference type="GO" id="GO:0003723">
    <property type="term" value="F:RNA binding"/>
    <property type="evidence" value="ECO:0007669"/>
    <property type="project" value="UniProtKB-KW"/>
</dbReference>
<dbReference type="GO" id="GO:0004831">
    <property type="term" value="F:tyrosine-tRNA ligase activity"/>
    <property type="evidence" value="ECO:0007669"/>
    <property type="project" value="UniProtKB-UniRule"/>
</dbReference>
<dbReference type="GO" id="GO:0006437">
    <property type="term" value="P:tyrosyl-tRNA aminoacylation"/>
    <property type="evidence" value="ECO:0007669"/>
    <property type="project" value="UniProtKB-UniRule"/>
</dbReference>
<dbReference type="CDD" id="cd00165">
    <property type="entry name" value="S4"/>
    <property type="match status" value="1"/>
</dbReference>
<dbReference type="CDD" id="cd00805">
    <property type="entry name" value="TyrRS_core"/>
    <property type="match status" value="1"/>
</dbReference>
<dbReference type="Gene3D" id="3.40.50.620">
    <property type="entry name" value="HUPs"/>
    <property type="match status" value="1"/>
</dbReference>
<dbReference type="Gene3D" id="3.10.290.10">
    <property type="entry name" value="RNA-binding S4 domain"/>
    <property type="match status" value="1"/>
</dbReference>
<dbReference type="Gene3D" id="1.10.240.10">
    <property type="entry name" value="Tyrosyl-Transfer RNA Synthetase"/>
    <property type="match status" value="1"/>
</dbReference>
<dbReference type="HAMAP" id="MF_02007">
    <property type="entry name" value="Tyr_tRNA_synth_type2"/>
    <property type="match status" value="1"/>
</dbReference>
<dbReference type="InterPro" id="IPR002305">
    <property type="entry name" value="aa-tRNA-synth_Ic"/>
</dbReference>
<dbReference type="InterPro" id="IPR014729">
    <property type="entry name" value="Rossmann-like_a/b/a_fold"/>
</dbReference>
<dbReference type="InterPro" id="IPR036986">
    <property type="entry name" value="S4_RNA-bd_sf"/>
</dbReference>
<dbReference type="InterPro" id="IPR054608">
    <property type="entry name" value="SYY-like_C"/>
</dbReference>
<dbReference type="InterPro" id="IPR002307">
    <property type="entry name" value="Tyr-tRNA-ligase"/>
</dbReference>
<dbReference type="InterPro" id="IPR024088">
    <property type="entry name" value="Tyr-tRNA-ligase_bac-type"/>
</dbReference>
<dbReference type="InterPro" id="IPR024108">
    <property type="entry name" value="Tyr-tRNA-ligase_bac_2"/>
</dbReference>
<dbReference type="NCBIfam" id="TIGR00234">
    <property type="entry name" value="tyrS"/>
    <property type="match status" value="1"/>
</dbReference>
<dbReference type="PANTHER" id="PTHR11766:SF1">
    <property type="entry name" value="TYROSINE--TRNA LIGASE"/>
    <property type="match status" value="1"/>
</dbReference>
<dbReference type="PANTHER" id="PTHR11766">
    <property type="entry name" value="TYROSYL-TRNA SYNTHETASE"/>
    <property type="match status" value="1"/>
</dbReference>
<dbReference type="Pfam" id="PF22421">
    <property type="entry name" value="SYY_C-terminal"/>
    <property type="match status" value="1"/>
</dbReference>
<dbReference type="Pfam" id="PF00579">
    <property type="entry name" value="tRNA-synt_1b"/>
    <property type="match status" value="1"/>
</dbReference>
<dbReference type="PRINTS" id="PR01040">
    <property type="entry name" value="TRNASYNTHTYR"/>
</dbReference>
<dbReference type="SUPFAM" id="SSF55174">
    <property type="entry name" value="Alpha-L RNA-binding motif"/>
    <property type="match status" value="1"/>
</dbReference>
<dbReference type="SUPFAM" id="SSF52374">
    <property type="entry name" value="Nucleotidylyl transferase"/>
    <property type="match status" value="1"/>
</dbReference>
<dbReference type="PROSITE" id="PS50889">
    <property type="entry name" value="S4"/>
    <property type="match status" value="1"/>
</dbReference>
<feature type="chain" id="PRO_0000236765" description="Tyrosine--tRNA ligase">
    <location>
        <begin position="1"/>
        <end position="415"/>
    </location>
</feature>
<feature type="domain" description="S4 RNA-binding" evidence="1">
    <location>
        <begin position="351"/>
        <end position="415"/>
    </location>
</feature>
<feature type="short sequence motif" description="'HIGH' region">
    <location>
        <begin position="54"/>
        <end position="63"/>
    </location>
</feature>
<feature type="short sequence motif" description="'KMSKS' region">
    <location>
        <begin position="248"/>
        <end position="252"/>
    </location>
</feature>
<feature type="binding site" evidence="1">
    <location>
        <position position="251"/>
    </location>
    <ligand>
        <name>ATP</name>
        <dbReference type="ChEBI" id="CHEBI:30616"/>
    </ligand>
</feature>
<accession>Q3AZE2</accession>
<sequence>MPETNPSLPSWLNRGMADLFPAGEPSDVDQSLAARLAAAEAEGRPLRVKLGIDPTGSNIHLGHSILFRKLRAFQDAGHIAVLIIGDFTARIGDPTGKSATRVQLSKNDVAVNASTYLRQLGQDQPKETALLDFETPGRLEVRYNSEWLEGMDLPAVIGLLGTGTVGQMLAKEDFSNRYNSGTPIALHEFLYPLLQGYDSVAVNADVELGGTDQKFNVAMGRDLQRHFGRGTQFGLLLPILVGLDGAQKMSKTLGNTVGLEDDPLSMYSKLEKVGDTAINDYVTLLTDLNVEALPENPREKQKAMALAVTATRHGTDAAAKAQLDAGNLVGGAGDASADVPEASLLAVNFPAKAFYLMSAVGICASSSEARRQIKGGAARLDGEKITDPNQEFASAAELDGRVLQLGKKTFRRLTA</sequence>
<reference key="1">
    <citation type="submission" date="2005-08" db="EMBL/GenBank/DDBJ databases">
        <title>Complete sequence of Synechococcus sp. CC9902.</title>
        <authorList>
            <person name="Copeland A."/>
            <person name="Lucas S."/>
            <person name="Lapidus A."/>
            <person name="Barry K."/>
            <person name="Detter J.C."/>
            <person name="Glavina T."/>
            <person name="Hammon N."/>
            <person name="Israni S."/>
            <person name="Pitluck S."/>
            <person name="Martinez M."/>
            <person name="Schmutz J."/>
            <person name="Larimer F."/>
            <person name="Land M."/>
            <person name="Kyrpides N."/>
            <person name="Ivanova N."/>
            <person name="Richardson P."/>
        </authorList>
    </citation>
    <scope>NUCLEOTIDE SEQUENCE [LARGE SCALE GENOMIC DNA]</scope>
    <source>
        <strain>CC9902</strain>
    </source>
</reference>
<name>SYY_SYNS9</name>
<organism>
    <name type="scientific">Synechococcus sp. (strain CC9902)</name>
    <dbReference type="NCBI Taxonomy" id="316279"/>
    <lineage>
        <taxon>Bacteria</taxon>
        <taxon>Bacillati</taxon>
        <taxon>Cyanobacteriota</taxon>
        <taxon>Cyanophyceae</taxon>
        <taxon>Synechococcales</taxon>
        <taxon>Synechococcaceae</taxon>
        <taxon>Synechococcus</taxon>
    </lineage>
</organism>
<gene>
    <name evidence="1" type="primary">tyrS</name>
    <name type="ordered locus">Syncc9902_0567</name>
</gene>
<keyword id="KW-0030">Aminoacyl-tRNA synthetase</keyword>
<keyword id="KW-0067">ATP-binding</keyword>
<keyword id="KW-0963">Cytoplasm</keyword>
<keyword id="KW-0436">Ligase</keyword>
<keyword id="KW-0547">Nucleotide-binding</keyword>
<keyword id="KW-0648">Protein biosynthesis</keyword>
<keyword id="KW-1185">Reference proteome</keyword>
<keyword id="KW-0694">RNA-binding</keyword>
<proteinExistence type="inferred from homology"/>
<comment type="function">
    <text evidence="1">Catalyzes the attachment of tyrosine to tRNA(Tyr) in a two-step reaction: tyrosine is first activated by ATP to form Tyr-AMP and then transferred to the acceptor end of tRNA(Tyr).</text>
</comment>
<comment type="catalytic activity">
    <reaction evidence="1">
        <text>tRNA(Tyr) + L-tyrosine + ATP = L-tyrosyl-tRNA(Tyr) + AMP + diphosphate + H(+)</text>
        <dbReference type="Rhea" id="RHEA:10220"/>
        <dbReference type="Rhea" id="RHEA-COMP:9706"/>
        <dbReference type="Rhea" id="RHEA-COMP:9707"/>
        <dbReference type="ChEBI" id="CHEBI:15378"/>
        <dbReference type="ChEBI" id="CHEBI:30616"/>
        <dbReference type="ChEBI" id="CHEBI:33019"/>
        <dbReference type="ChEBI" id="CHEBI:58315"/>
        <dbReference type="ChEBI" id="CHEBI:78442"/>
        <dbReference type="ChEBI" id="CHEBI:78536"/>
        <dbReference type="ChEBI" id="CHEBI:456215"/>
        <dbReference type="EC" id="6.1.1.1"/>
    </reaction>
</comment>
<comment type="subunit">
    <text evidence="1">Homodimer.</text>
</comment>
<comment type="subcellular location">
    <subcellularLocation>
        <location evidence="1">Cytoplasm</location>
    </subcellularLocation>
</comment>
<comment type="similarity">
    <text evidence="1">Belongs to the class-I aminoacyl-tRNA synthetase family. TyrS type 2 subfamily.</text>
</comment>
<protein>
    <recommendedName>
        <fullName evidence="1">Tyrosine--tRNA ligase</fullName>
        <ecNumber evidence="1">6.1.1.1</ecNumber>
    </recommendedName>
    <alternativeName>
        <fullName evidence="1">Tyrosyl-tRNA synthetase</fullName>
        <shortName evidence="1">TyrRS</shortName>
    </alternativeName>
</protein>